<dbReference type="EC" id="3.4.23.-"/>
<dbReference type="EMBL" id="AAFI02000189">
    <property type="protein sequence ID" value="EAL61279.1"/>
    <property type="molecule type" value="Genomic_DNA"/>
</dbReference>
<dbReference type="RefSeq" id="XP_629693.1">
    <property type="nucleotide sequence ID" value="XM_629691.1"/>
</dbReference>
<dbReference type="SMR" id="Q54DE8"/>
<dbReference type="FunCoup" id="Q54DE8">
    <property type="interactions" value="6"/>
</dbReference>
<dbReference type="STRING" id="44689.Q54DE8"/>
<dbReference type="MEROPS" id="A22.A10"/>
<dbReference type="GlyCosmos" id="Q54DE8">
    <property type="glycosylation" value="1 site, No reported glycans"/>
</dbReference>
<dbReference type="GlyGen" id="Q54DE8">
    <property type="glycosylation" value="1 site"/>
</dbReference>
<dbReference type="PaxDb" id="44689-DDB0231428"/>
<dbReference type="EnsemblProtists" id="EAL61279">
    <property type="protein sequence ID" value="EAL61279"/>
    <property type="gene ID" value="DDB_G0292310"/>
</dbReference>
<dbReference type="GeneID" id="8628609"/>
<dbReference type="KEGG" id="ddi:DDB_G0292310"/>
<dbReference type="dictyBase" id="DDB_G0292310">
    <property type="gene designation" value="psenB"/>
</dbReference>
<dbReference type="VEuPathDB" id="AmoebaDB:DDB_G0292310"/>
<dbReference type="eggNOG" id="KOG2736">
    <property type="taxonomic scope" value="Eukaryota"/>
</dbReference>
<dbReference type="HOGENOM" id="CLU_578009_0_0_1"/>
<dbReference type="InParanoid" id="Q54DE8"/>
<dbReference type="OMA" id="MYYQDID"/>
<dbReference type="PhylomeDB" id="Q54DE8"/>
<dbReference type="Reactome" id="R-DDI-6798695">
    <property type="pathway name" value="Neutrophil degranulation"/>
</dbReference>
<dbReference type="PRO" id="PR:Q54DE8"/>
<dbReference type="Proteomes" id="UP000002195">
    <property type="component" value="Chromosome 6"/>
</dbReference>
<dbReference type="GO" id="GO:0005783">
    <property type="term" value="C:endoplasmic reticulum"/>
    <property type="evidence" value="ECO:0000314"/>
    <property type="project" value="dictyBase"/>
</dbReference>
<dbReference type="GO" id="GO:0005789">
    <property type="term" value="C:endoplasmic reticulum membrane"/>
    <property type="evidence" value="ECO:0007669"/>
    <property type="project" value="UniProtKB-SubCell"/>
</dbReference>
<dbReference type="GO" id="GO:0070765">
    <property type="term" value="C:gamma-secretase complex"/>
    <property type="evidence" value="ECO:0000315"/>
    <property type="project" value="dictyBase"/>
</dbReference>
<dbReference type="GO" id="GO:0000139">
    <property type="term" value="C:Golgi membrane"/>
    <property type="evidence" value="ECO:0007669"/>
    <property type="project" value="UniProtKB-SubCell"/>
</dbReference>
<dbReference type="GO" id="GO:0005635">
    <property type="term" value="C:nuclear envelope"/>
    <property type="evidence" value="ECO:0000314"/>
    <property type="project" value="dictyBase"/>
</dbReference>
<dbReference type="GO" id="GO:0042500">
    <property type="term" value="F:aspartic endopeptidase activity, intramembrane cleaving"/>
    <property type="evidence" value="ECO:0007669"/>
    <property type="project" value="InterPro"/>
</dbReference>
<dbReference type="GO" id="GO:0004175">
    <property type="term" value="F:endopeptidase activity"/>
    <property type="evidence" value="ECO:0000318"/>
    <property type="project" value="GO_Central"/>
</dbReference>
<dbReference type="GO" id="GO:0034205">
    <property type="term" value="P:amyloid-beta formation"/>
    <property type="evidence" value="ECO:0000318"/>
    <property type="project" value="GO_Central"/>
</dbReference>
<dbReference type="GO" id="GO:0006914">
    <property type="term" value="P:autophagy"/>
    <property type="evidence" value="ECO:0000316"/>
    <property type="project" value="dictyBase"/>
</dbReference>
<dbReference type="GO" id="GO:0055074">
    <property type="term" value="P:calcium ion homeostasis"/>
    <property type="evidence" value="ECO:0000315"/>
    <property type="project" value="dictyBase"/>
</dbReference>
<dbReference type="GO" id="GO:0044351">
    <property type="term" value="P:macropinocytosis"/>
    <property type="evidence" value="ECO:0000316"/>
    <property type="project" value="dictyBase"/>
</dbReference>
<dbReference type="GO" id="GO:0006509">
    <property type="term" value="P:membrane protein ectodomain proteolysis"/>
    <property type="evidence" value="ECO:0000318"/>
    <property type="project" value="GO_Central"/>
</dbReference>
<dbReference type="GO" id="GO:0007219">
    <property type="term" value="P:Notch signaling pathway"/>
    <property type="evidence" value="ECO:0000318"/>
    <property type="project" value="GO_Central"/>
</dbReference>
<dbReference type="GO" id="GO:0006909">
    <property type="term" value="P:phagocytosis"/>
    <property type="evidence" value="ECO:0000315"/>
    <property type="project" value="dictyBase"/>
</dbReference>
<dbReference type="GO" id="GO:0016485">
    <property type="term" value="P:protein processing"/>
    <property type="evidence" value="ECO:0000315"/>
    <property type="project" value="dictyBase"/>
</dbReference>
<dbReference type="GO" id="GO:0106070">
    <property type="term" value="P:regulation of adenylate cyclase-activating G protein-coupled receptor signaling pathway"/>
    <property type="evidence" value="ECO:0000316"/>
    <property type="project" value="dictyBase"/>
</dbReference>
<dbReference type="GO" id="GO:0030587">
    <property type="term" value="P:sorocarp development"/>
    <property type="evidence" value="ECO:0000316"/>
    <property type="project" value="dictyBase"/>
</dbReference>
<dbReference type="GO" id="GO:0044671">
    <property type="term" value="P:sorocarp spore cell differentiation"/>
    <property type="evidence" value="ECO:0000315"/>
    <property type="project" value="dictyBase"/>
</dbReference>
<dbReference type="GO" id="GO:0031149">
    <property type="term" value="P:sorocarp stalk cell differentiation"/>
    <property type="evidence" value="ECO:0000316"/>
    <property type="project" value="dictyBase"/>
</dbReference>
<dbReference type="FunFam" id="1.10.472.100:FF:000003">
    <property type="entry name" value="Presenilin"/>
    <property type="match status" value="1"/>
</dbReference>
<dbReference type="Gene3D" id="1.10.472.100">
    <property type="entry name" value="Presenilin"/>
    <property type="match status" value="1"/>
</dbReference>
<dbReference type="InterPro" id="IPR001108">
    <property type="entry name" value="Peptidase_A22A"/>
</dbReference>
<dbReference type="InterPro" id="IPR006639">
    <property type="entry name" value="Preselin/SPP"/>
</dbReference>
<dbReference type="InterPro" id="IPR042524">
    <property type="entry name" value="Presenilin_C"/>
</dbReference>
<dbReference type="PANTHER" id="PTHR10202">
    <property type="entry name" value="PRESENILIN"/>
    <property type="match status" value="1"/>
</dbReference>
<dbReference type="PANTHER" id="PTHR10202:SF13">
    <property type="entry name" value="PRESENILIN HOMOLOG"/>
    <property type="match status" value="1"/>
</dbReference>
<dbReference type="Pfam" id="PF01080">
    <property type="entry name" value="Presenilin"/>
    <property type="match status" value="2"/>
</dbReference>
<dbReference type="PRINTS" id="PR01072">
    <property type="entry name" value="PRESENILIN"/>
</dbReference>
<dbReference type="SMART" id="SM00730">
    <property type="entry name" value="PSN"/>
    <property type="match status" value="1"/>
</dbReference>
<sequence>MSSDNNNDPFDLNEDGHDYFNRVSTTTSPNRQSINSSPKQSSPKSTNNNDDKNNIILDLNDNNNDNNNTNNYNDEDIDVDNKNKFENKDNTYNSNGGSNNKNKNKKKDNKSNNSSDNEEADENTSLISDSEPLLNKKEKDDEQIEIENLDGEDYDDEVSLQDFSSMIVSIIIPVSITMMAVVFFVKYLNNQTLYASTLSYTIAGGSSGGGSGADSITGNSFVDSLIVAGIVLGMIIVTTVAFVLLYKYRCLKILYGWLFLSVGMMLGSFGTTFFQAMLSAANLPLDYITFAFLIFNFTVCGIIGVFWYAHQYVNQLYLVIISVLMAISLTRLPQWTIFTLLVIVAIYDLFAVLCPRGPLKVLVELSQERNENIPALVYETGKGSDSNLKLGLGDFIFYSLLISRAALVHMSCVFSTFIAILTGLFLTLLCLAIFKKALPALPISIFLGILFYYLSNNFLTPFIEALTLSQIFV</sequence>
<reference key="1">
    <citation type="journal article" date="2005" name="Nature">
        <title>The genome of the social amoeba Dictyostelium discoideum.</title>
        <authorList>
            <person name="Eichinger L."/>
            <person name="Pachebat J.A."/>
            <person name="Gloeckner G."/>
            <person name="Rajandream M.A."/>
            <person name="Sucgang R."/>
            <person name="Berriman M."/>
            <person name="Song J."/>
            <person name="Olsen R."/>
            <person name="Szafranski K."/>
            <person name="Xu Q."/>
            <person name="Tunggal B."/>
            <person name="Kummerfeld S."/>
            <person name="Madera M."/>
            <person name="Konfortov B.A."/>
            <person name="Rivero F."/>
            <person name="Bankier A.T."/>
            <person name="Lehmann R."/>
            <person name="Hamlin N."/>
            <person name="Davies R."/>
            <person name="Gaudet P."/>
            <person name="Fey P."/>
            <person name="Pilcher K."/>
            <person name="Chen G."/>
            <person name="Saunders D."/>
            <person name="Sodergren E.J."/>
            <person name="Davis P."/>
            <person name="Kerhornou A."/>
            <person name="Nie X."/>
            <person name="Hall N."/>
            <person name="Anjard C."/>
            <person name="Hemphill L."/>
            <person name="Bason N."/>
            <person name="Farbrother P."/>
            <person name="Desany B."/>
            <person name="Just E."/>
            <person name="Morio T."/>
            <person name="Rost R."/>
            <person name="Churcher C.M."/>
            <person name="Cooper J."/>
            <person name="Haydock S."/>
            <person name="van Driessche N."/>
            <person name="Cronin A."/>
            <person name="Goodhead I."/>
            <person name="Muzny D.M."/>
            <person name="Mourier T."/>
            <person name="Pain A."/>
            <person name="Lu M."/>
            <person name="Harper D."/>
            <person name="Lindsay R."/>
            <person name="Hauser H."/>
            <person name="James K.D."/>
            <person name="Quiles M."/>
            <person name="Madan Babu M."/>
            <person name="Saito T."/>
            <person name="Buchrieser C."/>
            <person name="Wardroper A."/>
            <person name="Felder M."/>
            <person name="Thangavelu M."/>
            <person name="Johnson D."/>
            <person name="Knights A."/>
            <person name="Loulseged H."/>
            <person name="Mungall K.L."/>
            <person name="Oliver K."/>
            <person name="Price C."/>
            <person name="Quail M.A."/>
            <person name="Urushihara H."/>
            <person name="Hernandez J."/>
            <person name="Rabbinowitsch E."/>
            <person name="Steffen D."/>
            <person name="Sanders M."/>
            <person name="Ma J."/>
            <person name="Kohara Y."/>
            <person name="Sharp S."/>
            <person name="Simmonds M.N."/>
            <person name="Spiegler S."/>
            <person name="Tivey A."/>
            <person name="Sugano S."/>
            <person name="White B."/>
            <person name="Walker D."/>
            <person name="Woodward J.R."/>
            <person name="Winckler T."/>
            <person name="Tanaka Y."/>
            <person name="Shaulsky G."/>
            <person name="Schleicher M."/>
            <person name="Weinstock G.M."/>
            <person name="Rosenthal A."/>
            <person name="Cox E.C."/>
            <person name="Chisholm R.L."/>
            <person name="Gibbs R.A."/>
            <person name="Loomis W.F."/>
            <person name="Platzer M."/>
            <person name="Kay R.R."/>
            <person name="Williams J.G."/>
            <person name="Dear P.H."/>
            <person name="Noegel A.A."/>
            <person name="Barrell B.G."/>
            <person name="Kuspa A."/>
        </authorList>
    </citation>
    <scope>NUCLEOTIDE SEQUENCE [LARGE SCALE GENOMIC DNA]</scope>
    <source>
        <strain>AX4</strain>
    </source>
</reference>
<accession>Q54DE8</accession>
<protein>
    <recommendedName>
        <fullName>Presenilin-B</fullName>
        <shortName>PS-B</shortName>
        <ecNumber>3.4.23.-</ecNumber>
    </recommendedName>
</protein>
<organism>
    <name type="scientific">Dictyostelium discoideum</name>
    <name type="common">Social amoeba</name>
    <dbReference type="NCBI Taxonomy" id="44689"/>
    <lineage>
        <taxon>Eukaryota</taxon>
        <taxon>Amoebozoa</taxon>
        <taxon>Evosea</taxon>
        <taxon>Eumycetozoa</taxon>
        <taxon>Dictyostelia</taxon>
        <taxon>Dictyosteliales</taxon>
        <taxon>Dictyosteliaceae</taxon>
        <taxon>Dictyostelium</taxon>
    </lineage>
</organism>
<proteinExistence type="inferred from homology"/>
<name>PSNB_DICDI</name>
<evidence type="ECO:0000250" key="1"/>
<evidence type="ECO:0000255" key="2"/>
<evidence type="ECO:0000256" key="3">
    <source>
        <dbReference type="SAM" id="MobiDB-lite"/>
    </source>
</evidence>
<evidence type="ECO:0000305" key="4"/>
<gene>
    <name type="primary">psenB</name>
    <name type="ORF">DDB_G0292310</name>
</gene>
<keyword id="KW-0256">Endoplasmic reticulum</keyword>
<keyword id="KW-0325">Glycoprotein</keyword>
<keyword id="KW-0333">Golgi apparatus</keyword>
<keyword id="KW-0378">Hydrolase</keyword>
<keyword id="KW-0472">Membrane</keyword>
<keyword id="KW-0914">Notch signaling pathway</keyword>
<keyword id="KW-0645">Protease</keyword>
<keyword id="KW-1185">Reference proteome</keyword>
<keyword id="KW-0812">Transmembrane</keyword>
<keyword id="KW-1133">Transmembrane helix</keyword>
<comment type="function">
    <text evidence="1">Probable catalytic subunit of the gamma-secretase complex, an endoprotease complex that catalyzes the intramembrane cleavage of integral membrane proteins such as Notch receptors. Requires the other members of the gamma-secretase complex to have a protease activity (By similarity).</text>
</comment>
<comment type="subunit">
    <text evidence="1">Homodimer. Component of the gamma-secretase complex, a complex composed of a presenilin homodimer, nicastrin, aph1 and pen2 (By similarity).</text>
</comment>
<comment type="subcellular location">
    <subcellularLocation>
        <location evidence="1">Endoplasmic reticulum membrane</location>
        <topology evidence="1">Multi-pass membrane protein</topology>
    </subcellularLocation>
    <subcellularLocation>
        <location evidence="1">Golgi apparatus membrane</location>
        <topology evidence="1">Multi-pass membrane protein</topology>
    </subcellularLocation>
</comment>
<comment type="domain">
    <text evidence="1">The PAL motif is required for normal active site conformation.</text>
</comment>
<comment type="similarity">
    <text evidence="4">Belongs to the peptidase A22A family.</text>
</comment>
<feature type="chain" id="PRO_0000331268" description="Presenilin-B">
    <location>
        <begin position="1"/>
        <end position="473"/>
    </location>
</feature>
<feature type="topological domain" description="Cytoplasmic" evidence="2">
    <location>
        <begin position="1"/>
        <end position="164"/>
    </location>
</feature>
<feature type="transmembrane region" description="Helical" evidence="2">
    <location>
        <begin position="165"/>
        <end position="185"/>
    </location>
</feature>
<feature type="topological domain" description="Lumenal" evidence="2">
    <location>
        <begin position="186"/>
        <end position="224"/>
    </location>
</feature>
<feature type="transmembrane region" description="Helical" evidence="2">
    <location>
        <begin position="225"/>
        <end position="245"/>
    </location>
</feature>
<feature type="topological domain" description="Cytoplasmic" evidence="2">
    <location>
        <begin position="246"/>
        <end position="252"/>
    </location>
</feature>
<feature type="transmembrane region" description="Helical" evidence="2">
    <location>
        <begin position="253"/>
        <end position="273"/>
    </location>
</feature>
<feature type="topological domain" description="Lumenal" evidence="2">
    <location>
        <begin position="274"/>
        <end position="286"/>
    </location>
</feature>
<feature type="transmembrane region" description="Helical" evidence="2">
    <location>
        <begin position="287"/>
        <end position="307"/>
    </location>
</feature>
<feature type="topological domain" description="Cytoplasmic" evidence="2">
    <location>
        <position position="308"/>
    </location>
</feature>
<feature type="transmembrane region" description="Helical" evidence="2">
    <location>
        <begin position="309"/>
        <end position="329"/>
    </location>
</feature>
<feature type="topological domain" description="Lumenal" evidence="2">
    <location>
        <begin position="330"/>
        <end position="334"/>
    </location>
</feature>
<feature type="transmembrane region" description="Helical" evidence="2">
    <location>
        <begin position="335"/>
        <end position="355"/>
    </location>
</feature>
<feature type="topological domain" description="Cytoplasmic" evidence="2">
    <location>
        <begin position="356"/>
        <end position="389"/>
    </location>
</feature>
<feature type="transmembrane region" description="Helical" evidence="2">
    <location>
        <begin position="390"/>
        <end position="410"/>
    </location>
</feature>
<feature type="topological domain" description="Lumenal" evidence="2">
    <location>
        <begin position="411"/>
        <end position="413"/>
    </location>
</feature>
<feature type="transmembrane region" description="Helical" evidence="2">
    <location>
        <begin position="414"/>
        <end position="434"/>
    </location>
</feature>
<feature type="topological domain" description="Cytoplasmic" evidence="2">
    <location>
        <begin position="435"/>
        <end position="442"/>
    </location>
</feature>
<feature type="intramembrane region" description="Helical" evidence="2">
    <location>
        <begin position="443"/>
        <end position="463"/>
    </location>
</feature>
<feature type="topological domain" description="Cytoplasmic" evidence="2">
    <location>
        <begin position="464"/>
        <end position="473"/>
    </location>
</feature>
<feature type="region of interest" description="Disordered" evidence="3">
    <location>
        <begin position="1"/>
        <end position="141"/>
    </location>
</feature>
<feature type="short sequence motif" description="PAL">
    <location>
        <begin position="439"/>
        <end position="441"/>
    </location>
</feature>
<feature type="compositionally biased region" description="Polar residues" evidence="3">
    <location>
        <begin position="22"/>
        <end position="46"/>
    </location>
</feature>
<feature type="compositionally biased region" description="Low complexity" evidence="3">
    <location>
        <begin position="54"/>
        <end position="72"/>
    </location>
</feature>
<feature type="compositionally biased region" description="Basic and acidic residues" evidence="3">
    <location>
        <begin position="79"/>
        <end position="89"/>
    </location>
</feature>
<feature type="active site" evidence="1">
    <location>
        <position position="348"/>
    </location>
</feature>
<feature type="active site" evidence="1">
    <location>
        <position position="394"/>
    </location>
</feature>
<feature type="glycosylation site" description="N-linked (GlcNAc...) asparagine" evidence="2">
    <location>
        <position position="190"/>
    </location>
</feature>